<feature type="chain" id="PRO_1000140739" description="Small ribosomal subunit protein uS4">
    <location>
        <begin position="1"/>
        <end position="208"/>
    </location>
</feature>
<feature type="domain" description="S4 RNA-binding" evidence="1">
    <location>
        <begin position="98"/>
        <end position="159"/>
    </location>
</feature>
<comment type="function">
    <text evidence="1">One of the primary rRNA binding proteins, it binds directly to 16S rRNA where it nucleates assembly of the body of the 30S subunit.</text>
</comment>
<comment type="function">
    <text evidence="1">With S5 and S12 plays an important role in translational accuracy.</text>
</comment>
<comment type="subunit">
    <text evidence="1">Part of the 30S ribosomal subunit. Contacts protein S5. The interaction surface between S4 and S5 is involved in control of translational fidelity.</text>
</comment>
<comment type="similarity">
    <text evidence="1">Belongs to the universal ribosomal protein uS4 family.</text>
</comment>
<name>RS4_TRIL1</name>
<gene>
    <name evidence="1" type="primary">rpsD</name>
    <name type="ordered locus">Glov_1372</name>
</gene>
<sequence>MARYIGPSCRLCRRENMELFLKGDRCYTDKCALKRRNYPPGQHGQGRSKTSDYGVQLREKQKVKRLYGLLEKQFRSYFDRADRMKGVTGENLLSLLERRLDNVVYRLGFASSRSEARQLVRHGHFVLNGRKATIPSIQVKAGDTIVLREKSRNVAAISEALDAVVRRGIPQWLELDRDAFTGLAKTVPVREDISTPIQEQLIVELYSK</sequence>
<dbReference type="EMBL" id="CP001089">
    <property type="protein sequence ID" value="ACD95093.1"/>
    <property type="molecule type" value="Genomic_DNA"/>
</dbReference>
<dbReference type="RefSeq" id="WP_012469438.1">
    <property type="nucleotide sequence ID" value="NC_010814.1"/>
</dbReference>
<dbReference type="SMR" id="B3E856"/>
<dbReference type="STRING" id="398767.Glov_1372"/>
<dbReference type="KEGG" id="glo:Glov_1372"/>
<dbReference type="eggNOG" id="COG0522">
    <property type="taxonomic scope" value="Bacteria"/>
</dbReference>
<dbReference type="HOGENOM" id="CLU_092403_0_2_7"/>
<dbReference type="OrthoDB" id="9803672at2"/>
<dbReference type="Proteomes" id="UP000002420">
    <property type="component" value="Chromosome"/>
</dbReference>
<dbReference type="GO" id="GO:0015935">
    <property type="term" value="C:small ribosomal subunit"/>
    <property type="evidence" value="ECO:0007669"/>
    <property type="project" value="InterPro"/>
</dbReference>
<dbReference type="GO" id="GO:0019843">
    <property type="term" value="F:rRNA binding"/>
    <property type="evidence" value="ECO:0007669"/>
    <property type="project" value="UniProtKB-UniRule"/>
</dbReference>
<dbReference type="GO" id="GO:0003735">
    <property type="term" value="F:structural constituent of ribosome"/>
    <property type="evidence" value="ECO:0007669"/>
    <property type="project" value="InterPro"/>
</dbReference>
<dbReference type="GO" id="GO:0042274">
    <property type="term" value="P:ribosomal small subunit biogenesis"/>
    <property type="evidence" value="ECO:0007669"/>
    <property type="project" value="TreeGrafter"/>
</dbReference>
<dbReference type="GO" id="GO:0006412">
    <property type="term" value="P:translation"/>
    <property type="evidence" value="ECO:0007669"/>
    <property type="project" value="UniProtKB-UniRule"/>
</dbReference>
<dbReference type="CDD" id="cd00165">
    <property type="entry name" value="S4"/>
    <property type="match status" value="1"/>
</dbReference>
<dbReference type="FunFam" id="1.10.1050.10:FF:000001">
    <property type="entry name" value="30S ribosomal protein S4"/>
    <property type="match status" value="1"/>
</dbReference>
<dbReference type="FunFam" id="3.10.290.10:FF:000001">
    <property type="entry name" value="30S ribosomal protein S4"/>
    <property type="match status" value="1"/>
</dbReference>
<dbReference type="Gene3D" id="1.10.1050.10">
    <property type="entry name" value="Ribosomal Protein S4 Delta 41, Chain A, domain 1"/>
    <property type="match status" value="1"/>
</dbReference>
<dbReference type="Gene3D" id="3.10.290.10">
    <property type="entry name" value="RNA-binding S4 domain"/>
    <property type="match status" value="1"/>
</dbReference>
<dbReference type="HAMAP" id="MF_01306_B">
    <property type="entry name" value="Ribosomal_uS4_B"/>
    <property type="match status" value="1"/>
</dbReference>
<dbReference type="InterPro" id="IPR022801">
    <property type="entry name" value="Ribosomal_uS4"/>
</dbReference>
<dbReference type="InterPro" id="IPR005709">
    <property type="entry name" value="Ribosomal_uS4_bac-type"/>
</dbReference>
<dbReference type="InterPro" id="IPR018079">
    <property type="entry name" value="Ribosomal_uS4_CS"/>
</dbReference>
<dbReference type="InterPro" id="IPR001912">
    <property type="entry name" value="Ribosomal_uS4_N"/>
</dbReference>
<dbReference type="InterPro" id="IPR002942">
    <property type="entry name" value="S4_RNA-bd"/>
</dbReference>
<dbReference type="InterPro" id="IPR036986">
    <property type="entry name" value="S4_RNA-bd_sf"/>
</dbReference>
<dbReference type="NCBIfam" id="NF003717">
    <property type="entry name" value="PRK05327.1"/>
    <property type="match status" value="1"/>
</dbReference>
<dbReference type="NCBIfam" id="TIGR01017">
    <property type="entry name" value="rpsD_bact"/>
    <property type="match status" value="1"/>
</dbReference>
<dbReference type="PANTHER" id="PTHR11831">
    <property type="entry name" value="30S 40S RIBOSOMAL PROTEIN"/>
    <property type="match status" value="1"/>
</dbReference>
<dbReference type="PANTHER" id="PTHR11831:SF4">
    <property type="entry name" value="SMALL RIBOSOMAL SUBUNIT PROTEIN US4M"/>
    <property type="match status" value="1"/>
</dbReference>
<dbReference type="Pfam" id="PF00163">
    <property type="entry name" value="Ribosomal_S4"/>
    <property type="match status" value="1"/>
</dbReference>
<dbReference type="Pfam" id="PF01479">
    <property type="entry name" value="S4"/>
    <property type="match status" value="1"/>
</dbReference>
<dbReference type="SMART" id="SM01390">
    <property type="entry name" value="Ribosomal_S4"/>
    <property type="match status" value="1"/>
</dbReference>
<dbReference type="SMART" id="SM00363">
    <property type="entry name" value="S4"/>
    <property type="match status" value="1"/>
</dbReference>
<dbReference type="SUPFAM" id="SSF55174">
    <property type="entry name" value="Alpha-L RNA-binding motif"/>
    <property type="match status" value="1"/>
</dbReference>
<dbReference type="PROSITE" id="PS00632">
    <property type="entry name" value="RIBOSOMAL_S4"/>
    <property type="match status" value="1"/>
</dbReference>
<dbReference type="PROSITE" id="PS50889">
    <property type="entry name" value="S4"/>
    <property type="match status" value="1"/>
</dbReference>
<evidence type="ECO:0000255" key="1">
    <source>
        <dbReference type="HAMAP-Rule" id="MF_01306"/>
    </source>
</evidence>
<evidence type="ECO:0000305" key="2"/>
<accession>B3E856</accession>
<proteinExistence type="inferred from homology"/>
<keyword id="KW-1185">Reference proteome</keyword>
<keyword id="KW-0687">Ribonucleoprotein</keyword>
<keyword id="KW-0689">Ribosomal protein</keyword>
<keyword id="KW-0694">RNA-binding</keyword>
<keyword id="KW-0699">rRNA-binding</keyword>
<protein>
    <recommendedName>
        <fullName evidence="1">Small ribosomal subunit protein uS4</fullName>
    </recommendedName>
    <alternativeName>
        <fullName evidence="2">30S ribosomal protein S4</fullName>
    </alternativeName>
</protein>
<reference key="1">
    <citation type="submission" date="2008-05" db="EMBL/GenBank/DDBJ databases">
        <title>Complete sequence of chromosome of Geobacter lovleyi SZ.</title>
        <authorList>
            <consortium name="US DOE Joint Genome Institute"/>
            <person name="Lucas S."/>
            <person name="Copeland A."/>
            <person name="Lapidus A."/>
            <person name="Glavina del Rio T."/>
            <person name="Dalin E."/>
            <person name="Tice H."/>
            <person name="Bruce D."/>
            <person name="Goodwin L."/>
            <person name="Pitluck S."/>
            <person name="Chertkov O."/>
            <person name="Meincke L."/>
            <person name="Brettin T."/>
            <person name="Detter J.C."/>
            <person name="Han C."/>
            <person name="Tapia R."/>
            <person name="Kuske C.R."/>
            <person name="Schmutz J."/>
            <person name="Larimer F."/>
            <person name="Land M."/>
            <person name="Hauser L."/>
            <person name="Kyrpides N."/>
            <person name="Mikhailova N."/>
            <person name="Sung Y."/>
            <person name="Fletcher K.E."/>
            <person name="Ritalahti K.M."/>
            <person name="Loeffler F.E."/>
            <person name="Richardson P."/>
        </authorList>
    </citation>
    <scope>NUCLEOTIDE SEQUENCE [LARGE SCALE GENOMIC DNA]</scope>
    <source>
        <strain>ATCC BAA-1151 / DSM 17278 / SZ</strain>
    </source>
</reference>
<organism>
    <name type="scientific">Trichlorobacter lovleyi (strain ATCC BAA-1151 / DSM 17278 / SZ)</name>
    <name type="common">Geobacter lovleyi</name>
    <dbReference type="NCBI Taxonomy" id="398767"/>
    <lineage>
        <taxon>Bacteria</taxon>
        <taxon>Pseudomonadati</taxon>
        <taxon>Thermodesulfobacteriota</taxon>
        <taxon>Desulfuromonadia</taxon>
        <taxon>Geobacterales</taxon>
        <taxon>Geobacteraceae</taxon>
        <taxon>Trichlorobacter</taxon>
    </lineage>
</organism>